<sequence>MAHKKGASSSRNGRDSNPQYLGVKKFGGEAVVAGNIIVRQRGTNFHPGHNVGMGKDHTLFALTDGSVKFGVRRDRKVVDVIA</sequence>
<reference key="1">
    <citation type="journal article" date="2008" name="Proc. Natl. Acad. Sci. U.S.A.">
        <title>The genome sequence of Bifidobacterium longum subsp. infantis reveals adaptations for milk utilization within the infant microbiome.</title>
        <authorList>
            <person name="Sela D.A."/>
            <person name="Chapman J."/>
            <person name="Adeuya A."/>
            <person name="Kim J.H."/>
            <person name="Chen F."/>
            <person name="Whitehead T.R."/>
            <person name="Lapidus A."/>
            <person name="Rokhsar D.S."/>
            <person name="Lebrilla C.B."/>
            <person name="German J.B."/>
            <person name="Price N.P."/>
            <person name="Richardson P.M."/>
            <person name="Mills D.A."/>
        </authorList>
    </citation>
    <scope>NUCLEOTIDE SEQUENCE [LARGE SCALE GENOMIC DNA]</scope>
    <source>
        <strain>ATCC 15697 / DSM 20088 / JCM 1222 / NCTC 11817 / S12</strain>
    </source>
</reference>
<reference key="2">
    <citation type="journal article" date="2011" name="Nature">
        <title>Bifidobacteria can protect from enteropathogenic infection through production of acetate.</title>
        <authorList>
            <person name="Fukuda S."/>
            <person name="Toh H."/>
            <person name="Hase K."/>
            <person name="Oshima K."/>
            <person name="Nakanishi Y."/>
            <person name="Yoshimura K."/>
            <person name="Tobe T."/>
            <person name="Clarke J.M."/>
            <person name="Topping D.L."/>
            <person name="Suzuki T."/>
            <person name="Taylor T.D."/>
            <person name="Itoh K."/>
            <person name="Kikuchi J."/>
            <person name="Morita H."/>
            <person name="Hattori M."/>
            <person name="Ohno H."/>
        </authorList>
    </citation>
    <scope>NUCLEOTIDE SEQUENCE [LARGE SCALE GENOMIC DNA]</scope>
    <source>
        <strain>ATCC 15697 / DSM 20088 / JCM 1222 / NCTC 11817 / S12</strain>
    </source>
</reference>
<evidence type="ECO:0000255" key="1">
    <source>
        <dbReference type="HAMAP-Rule" id="MF_00539"/>
    </source>
</evidence>
<evidence type="ECO:0000256" key="2">
    <source>
        <dbReference type="SAM" id="MobiDB-lite"/>
    </source>
</evidence>
<evidence type="ECO:0000305" key="3"/>
<proteinExistence type="inferred from homology"/>
<dbReference type="EMBL" id="CP001095">
    <property type="protein sequence ID" value="ACJ53358.1"/>
    <property type="molecule type" value="Genomic_DNA"/>
</dbReference>
<dbReference type="EMBL" id="AP010889">
    <property type="protein sequence ID" value="BAJ69951.1"/>
    <property type="molecule type" value="Genomic_DNA"/>
</dbReference>
<dbReference type="RefSeq" id="WP_007053061.1">
    <property type="nucleotide sequence ID" value="NZ_JDTT01000025.1"/>
</dbReference>
<dbReference type="SMR" id="B7GNK2"/>
<dbReference type="GeneID" id="69578969"/>
<dbReference type="KEGG" id="bln:Blon_2300"/>
<dbReference type="KEGG" id="blon:BLIJ_2374"/>
<dbReference type="PATRIC" id="fig|391904.8.peg.2375"/>
<dbReference type="HOGENOM" id="CLU_095424_4_0_11"/>
<dbReference type="Proteomes" id="UP000001360">
    <property type="component" value="Chromosome"/>
</dbReference>
<dbReference type="GO" id="GO:0022625">
    <property type="term" value="C:cytosolic large ribosomal subunit"/>
    <property type="evidence" value="ECO:0007669"/>
    <property type="project" value="TreeGrafter"/>
</dbReference>
<dbReference type="GO" id="GO:0003735">
    <property type="term" value="F:structural constituent of ribosome"/>
    <property type="evidence" value="ECO:0007669"/>
    <property type="project" value="InterPro"/>
</dbReference>
<dbReference type="GO" id="GO:0006412">
    <property type="term" value="P:translation"/>
    <property type="evidence" value="ECO:0007669"/>
    <property type="project" value="UniProtKB-UniRule"/>
</dbReference>
<dbReference type="FunFam" id="2.40.50.100:FF:000020">
    <property type="entry name" value="50S ribosomal protein L27"/>
    <property type="match status" value="1"/>
</dbReference>
<dbReference type="Gene3D" id="2.40.50.100">
    <property type="match status" value="1"/>
</dbReference>
<dbReference type="HAMAP" id="MF_00539">
    <property type="entry name" value="Ribosomal_bL27"/>
    <property type="match status" value="1"/>
</dbReference>
<dbReference type="InterPro" id="IPR001684">
    <property type="entry name" value="Ribosomal_bL27"/>
</dbReference>
<dbReference type="InterPro" id="IPR018261">
    <property type="entry name" value="Ribosomal_bL27_CS"/>
</dbReference>
<dbReference type="NCBIfam" id="TIGR00062">
    <property type="entry name" value="L27"/>
    <property type="match status" value="1"/>
</dbReference>
<dbReference type="PANTHER" id="PTHR15893:SF0">
    <property type="entry name" value="LARGE RIBOSOMAL SUBUNIT PROTEIN BL27M"/>
    <property type="match status" value="1"/>
</dbReference>
<dbReference type="PANTHER" id="PTHR15893">
    <property type="entry name" value="RIBOSOMAL PROTEIN L27"/>
    <property type="match status" value="1"/>
</dbReference>
<dbReference type="Pfam" id="PF01016">
    <property type="entry name" value="Ribosomal_L27"/>
    <property type="match status" value="1"/>
</dbReference>
<dbReference type="PRINTS" id="PR00063">
    <property type="entry name" value="RIBOSOMALL27"/>
</dbReference>
<dbReference type="SUPFAM" id="SSF110324">
    <property type="entry name" value="Ribosomal L27 protein-like"/>
    <property type="match status" value="1"/>
</dbReference>
<dbReference type="PROSITE" id="PS00831">
    <property type="entry name" value="RIBOSOMAL_L27"/>
    <property type="match status" value="1"/>
</dbReference>
<feature type="chain" id="PRO_1000146510" description="Large ribosomal subunit protein bL27">
    <location>
        <begin position="1"/>
        <end position="82"/>
    </location>
</feature>
<feature type="region of interest" description="Disordered" evidence="2">
    <location>
        <begin position="1"/>
        <end position="20"/>
    </location>
</feature>
<feature type="compositionally biased region" description="Polar residues" evidence="2">
    <location>
        <begin position="7"/>
        <end position="19"/>
    </location>
</feature>
<organism>
    <name type="scientific">Bifidobacterium longum subsp. infantis (strain ATCC 15697 / DSM 20088 / JCM 1222 / NCTC 11817 / S12)</name>
    <dbReference type="NCBI Taxonomy" id="391904"/>
    <lineage>
        <taxon>Bacteria</taxon>
        <taxon>Bacillati</taxon>
        <taxon>Actinomycetota</taxon>
        <taxon>Actinomycetes</taxon>
        <taxon>Bifidobacteriales</taxon>
        <taxon>Bifidobacteriaceae</taxon>
        <taxon>Bifidobacterium</taxon>
    </lineage>
</organism>
<gene>
    <name evidence="1" type="primary">rpmA</name>
    <name type="ordered locus">Blon_2300</name>
    <name type="ordered locus">BLIJ_2374</name>
</gene>
<keyword id="KW-0687">Ribonucleoprotein</keyword>
<keyword id="KW-0689">Ribosomal protein</keyword>
<protein>
    <recommendedName>
        <fullName evidence="1">Large ribosomal subunit protein bL27</fullName>
    </recommendedName>
    <alternativeName>
        <fullName evidence="3">50S ribosomal protein L27</fullName>
    </alternativeName>
</protein>
<name>RL27_BIFLS</name>
<comment type="similarity">
    <text evidence="1">Belongs to the bacterial ribosomal protein bL27 family.</text>
</comment>
<accession>B7GNK2</accession>
<accession>E8MNT5</accession>